<comment type="function">
    <text evidence="1">This protein promotes the GTP-dependent binding of aminoacyl-tRNA to the A-site of ribosomes during protein biosynthesis.</text>
</comment>
<comment type="subcellular location">
    <subcellularLocation>
        <location evidence="1">Cytoplasm</location>
    </subcellularLocation>
</comment>
<comment type="similarity">
    <text evidence="2">Belongs to the TRAFAC class translation factor GTPase superfamily. Classic translation factor GTPase family. EF-Tu/EF-1A subfamily.</text>
</comment>
<proteinExistence type="inferred from homology"/>
<accession>Q2HJN9</accession>
<feature type="chain" id="PRO_0000303017" description="Elongation factor 1-alpha 4">
    <location>
        <begin position="1"/>
        <end position="459"/>
    </location>
</feature>
<feature type="domain" description="tr-type G" evidence="2">
    <location>
        <begin position="5"/>
        <end position="242"/>
    </location>
</feature>
<feature type="region of interest" description="G1" evidence="2">
    <location>
        <begin position="14"/>
        <end position="21"/>
    </location>
</feature>
<feature type="region of interest" description="G2" evidence="2">
    <location>
        <begin position="70"/>
        <end position="74"/>
    </location>
</feature>
<feature type="region of interest" description="G3" evidence="2">
    <location>
        <begin position="91"/>
        <end position="94"/>
    </location>
</feature>
<feature type="region of interest" description="G4" evidence="2">
    <location>
        <begin position="153"/>
        <end position="156"/>
    </location>
</feature>
<feature type="region of interest" description="G5" evidence="2">
    <location>
        <begin position="194"/>
        <end position="196"/>
    </location>
</feature>
<feature type="modified residue" description="5-glutamyl glycerylphosphorylethanolamine" evidence="1">
    <location>
        <position position="301"/>
    </location>
</feature>
<feature type="modified residue" description="5-glutamyl glycerylphosphorylethanolamine" evidence="1">
    <location>
        <position position="374"/>
    </location>
</feature>
<sequence>MGKEKTHINIVVIGHVDSGKSTTTGHLIYKCGGIDKRTIEKFEKEAQEMGKGSFKYAWVLDKLKAERERGITIDIALWKFETAKFYVTIIDAPGHRDFIKNMITGTSQADCAVLVVACGTGEFEAGISKNGQTREHALLAQTLGVKQMIVACNKMDSTEPPFSEKRFEEIITEVKSFIKKIGYNPATIPFVPISGFNGDNMLEPSANMSWYKGWSVERKEGNASGKTLLEALDCIIPPQRPTDRPLRLPLQDVYKIGGIGTVPVGRVETGVIKPGMVVTFAPQNVTTEVKSVEMHHESLPEAQPGDNVGFNEKNVSVKDIRRGSVCSDSKNDPAKESKSFTAQVIVMNHPGQIGAGYTPVLDCHTAHIACKFAELKEKVDRRTGKKVEDLPKFLKSGDAGIVELIPTKPLCVEAFTDYAPLGRFAVRDMRQTVAVGVIKGVTKDDGSSGKVTKSAQKKK</sequence>
<evidence type="ECO:0000250" key="1"/>
<evidence type="ECO:0000255" key="2">
    <source>
        <dbReference type="PROSITE-ProRule" id="PRU01059"/>
    </source>
</evidence>
<gene>
    <name type="primary">eft-4</name>
</gene>
<dbReference type="EMBL" id="AY928337">
    <property type="protein sequence ID" value="AAY17221.1"/>
    <property type="molecule type" value="Genomic_DNA"/>
</dbReference>
<dbReference type="SMR" id="Q2HJN9"/>
<dbReference type="GO" id="GO:0005737">
    <property type="term" value="C:cytoplasm"/>
    <property type="evidence" value="ECO:0007669"/>
    <property type="project" value="UniProtKB-SubCell"/>
</dbReference>
<dbReference type="GO" id="GO:0005525">
    <property type="term" value="F:GTP binding"/>
    <property type="evidence" value="ECO:0007669"/>
    <property type="project" value="UniProtKB-KW"/>
</dbReference>
<dbReference type="GO" id="GO:0003924">
    <property type="term" value="F:GTPase activity"/>
    <property type="evidence" value="ECO:0007669"/>
    <property type="project" value="InterPro"/>
</dbReference>
<dbReference type="GO" id="GO:0003746">
    <property type="term" value="F:translation elongation factor activity"/>
    <property type="evidence" value="ECO:0007669"/>
    <property type="project" value="UniProtKB-KW"/>
</dbReference>
<dbReference type="CDD" id="cd01883">
    <property type="entry name" value="EF1_alpha"/>
    <property type="match status" value="1"/>
</dbReference>
<dbReference type="CDD" id="cd03693">
    <property type="entry name" value="EF1_alpha_II"/>
    <property type="match status" value="1"/>
</dbReference>
<dbReference type="CDD" id="cd03705">
    <property type="entry name" value="EF1_alpha_III"/>
    <property type="match status" value="1"/>
</dbReference>
<dbReference type="FunFam" id="2.40.30.10:FF:000003">
    <property type="entry name" value="Elongation factor 1-alpha"/>
    <property type="match status" value="1"/>
</dbReference>
<dbReference type="FunFam" id="2.40.30.10:FF:000005">
    <property type="entry name" value="Elongation factor 1-alpha"/>
    <property type="match status" value="1"/>
</dbReference>
<dbReference type="FunFam" id="3.40.50.300:FF:000090">
    <property type="entry name" value="Elongation factor 1-alpha"/>
    <property type="match status" value="1"/>
</dbReference>
<dbReference type="Gene3D" id="3.40.50.300">
    <property type="entry name" value="P-loop containing nucleotide triphosphate hydrolases"/>
    <property type="match status" value="1"/>
</dbReference>
<dbReference type="Gene3D" id="2.40.30.10">
    <property type="entry name" value="Translation factors"/>
    <property type="match status" value="2"/>
</dbReference>
<dbReference type="InterPro" id="IPR004161">
    <property type="entry name" value="EFTu-like_2"/>
</dbReference>
<dbReference type="InterPro" id="IPR031157">
    <property type="entry name" value="G_TR_CS"/>
</dbReference>
<dbReference type="InterPro" id="IPR054696">
    <property type="entry name" value="GTP-eEF1A_C"/>
</dbReference>
<dbReference type="InterPro" id="IPR027417">
    <property type="entry name" value="P-loop_NTPase"/>
</dbReference>
<dbReference type="InterPro" id="IPR000795">
    <property type="entry name" value="T_Tr_GTP-bd_dom"/>
</dbReference>
<dbReference type="InterPro" id="IPR050100">
    <property type="entry name" value="TRAFAC_GTPase_members"/>
</dbReference>
<dbReference type="InterPro" id="IPR009000">
    <property type="entry name" value="Transl_B-barrel_sf"/>
</dbReference>
<dbReference type="InterPro" id="IPR009001">
    <property type="entry name" value="Transl_elong_EF1A/Init_IF2_C"/>
</dbReference>
<dbReference type="InterPro" id="IPR004539">
    <property type="entry name" value="Transl_elong_EF1A_euk/arc"/>
</dbReference>
<dbReference type="NCBIfam" id="TIGR00483">
    <property type="entry name" value="EF-1_alpha"/>
    <property type="match status" value="1"/>
</dbReference>
<dbReference type="NCBIfam" id="NF008969">
    <property type="entry name" value="PRK12317.1"/>
    <property type="match status" value="1"/>
</dbReference>
<dbReference type="PANTHER" id="PTHR23115">
    <property type="entry name" value="TRANSLATION FACTOR"/>
    <property type="match status" value="1"/>
</dbReference>
<dbReference type="Pfam" id="PF22594">
    <property type="entry name" value="GTP-eEF1A_C"/>
    <property type="match status" value="1"/>
</dbReference>
<dbReference type="Pfam" id="PF00009">
    <property type="entry name" value="GTP_EFTU"/>
    <property type="match status" value="1"/>
</dbReference>
<dbReference type="Pfam" id="PF03144">
    <property type="entry name" value="GTP_EFTU_D2"/>
    <property type="match status" value="1"/>
</dbReference>
<dbReference type="PRINTS" id="PR00315">
    <property type="entry name" value="ELONGATNFCT"/>
</dbReference>
<dbReference type="SUPFAM" id="SSF50465">
    <property type="entry name" value="EF-Tu/eEF-1alpha/eIF2-gamma C-terminal domain"/>
    <property type="match status" value="1"/>
</dbReference>
<dbReference type="SUPFAM" id="SSF52540">
    <property type="entry name" value="P-loop containing nucleoside triphosphate hydrolases"/>
    <property type="match status" value="1"/>
</dbReference>
<dbReference type="SUPFAM" id="SSF50447">
    <property type="entry name" value="Translation proteins"/>
    <property type="match status" value="1"/>
</dbReference>
<dbReference type="PROSITE" id="PS00301">
    <property type="entry name" value="G_TR_1"/>
    <property type="match status" value="1"/>
</dbReference>
<dbReference type="PROSITE" id="PS51722">
    <property type="entry name" value="G_TR_2"/>
    <property type="match status" value="1"/>
</dbReference>
<name>EF1A4_OSCTI</name>
<protein>
    <recommendedName>
        <fullName>Elongation factor 1-alpha 4</fullName>
        <shortName>EF-1-alpha-4</shortName>
    </recommendedName>
</protein>
<organism>
    <name type="scientific">Oscheius tipulae</name>
    <dbReference type="NCBI Taxonomy" id="141969"/>
    <lineage>
        <taxon>Eukaryota</taxon>
        <taxon>Metazoa</taxon>
        <taxon>Ecdysozoa</taxon>
        <taxon>Nematoda</taxon>
        <taxon>Chromadorea</taxon>
        <taxon>Rhabditida</taxon>
        <taxon>Rhabditina</taxon>
        <taxon>Rhabditomorpha</taxon>
        <taxon>Rhabditoidea</taxon>
        <taxon>Rhabditidae</taxon>
        <taxon>Rhabditinae</taxon>
        <taxon>Oscheius</taxon>
    </lineage>
</organism>
<keyword id="KW-0963">Cytoplasm</keyword>
<keyword id="KW-0251">Elongation factor</keyword>
<keyword id="KW-0342">GTP-binding</keyword>
<keyword id="KW-0547">Nucleotide-binding</keyword>
<keyword id="KW-0597">Phosphoprotein</keyword>
<keyword id="KW-0648">Protein biosynthesis</keyword>
<reference key="1">
    <citation type="submission" date="2005-02" db="EMBL/GenBank/DDBJ databases">
        <title>Four eEF1A genes from a Rhabditid nematode.</title>
        <authorList>
            <person name="Akamine R.N."/>
            <person name="Winter C.E."/>
        </authorList>
    </citation>
    <scope>NUCLEOTIDE SEQUENCE [GENOMIC DNA]</scope>
    <source>
        <strain>CEW1</strain>
    </source>
</reference>